<feature type="chain" id="PRO_0000375403" description="YcgL domain-containing protein XCC3997">
    <location>
        <begin position="1"/>
        <end position="86"/>
    </location>
</feature>
<feature type="domain" description="YcgL" evidence="1">
    <location>
        <begin position="1"/>
        <end position="83"/>
    </location>
</feature>
<protein>
    <recommendedName>
        <fullName evidence="1">YcgL domain-containing protein XCC3997</fullName>
    </recommendedName>
</protein>
<sequence>MHAYVYKSQRKQDTFVYLATRDDFSVIPADVQARLAPFAFVLDAALTPERRLAQADADTVRAALASHGFYLQLPKTVVLAGECDYD</sequence>
<name>Y3997_XANCP</name>
<evidence type="ECO:0000255" key="1">
    <source>
        <dbReference type="HAMAP-Rule" id="MF_01866"/>
    </source>
</evidence>
<keyword id="KW-1185">Reference proteome</keyword>
<reference key="1">
    <citation type="journal article" date="2002" name="Nature">
        <title>Comparison of the genomes of two Xanthomonas pathogens with differing host specificities.</title>
        <authorList>
            <person name="da Silva A.C.R."/>
            <person name="Ferro J.A."/>
            <person name="Reinach F.C."/>
            <person name="Farah C.S."/>
            <person name="Furlan L.R."/>
            <person name="Quaggio R.B."/>
            <person name="Monteiro-Vitorello C.B."/>
            <person name="Van Sluys M.A."/>
            <person name="Almeida N.F. Jr."/>
            <person name="Alves L.M.C."/>
            <person name="do Amaral A.M."/>
            <person name="Bertolini M.C."/>
            <person name="Camargo L.E.A."/>
            <person name="Camarotte G."/>
            <person name="Cannavan F."/>
            <person name="Cardozo J."/>
            <person name="Chambergo F."/>
            <person name="Ciapina L.P."/>
            <person name="Cicarelli R.M.B."/>
            <person name="Coutinho L.L."/>
            <person name="Cursino-Santos J.R."/>
            <person name="El-Dorry H."/>
            <person name="Faria J.B."/>
            <person name="Ferreira A.J.S."/>
            <person name="Ferreira R.C.C."/>
            <person name="Ferro M.I.T."/>
            <person name="Formighieri E.F."/>
            <person name="Franco M.C."/>
            <person name="Greggio C.C."/>
            <person name="Gruber A."/>
            <person name="Katsuyama A.M."/>
            <person name="Kishi L.T."/>
            <person name="Leite R.P."/>
            <person name="Lemos E.G.M."/>
            <person name="Lemos M.V.F."/>
            <person name="Locali E.C."/>
            <person name="Machado M.A."/>
            <person name="Madeira A.M.B.N."/>
            <person name="Martinez-Rossi N.M."/>
            <person name="Martins E.C."/>
            <person name="Meidanis J."/>
            <person name="Menck C.F.M."/>
            <person name="Miyaki C.Y."/>
            <person name="Moon D.H."/>
            <person name="Moreira L.M."/>
            <person name="Novo M.T.M."/>
            <person name="Okura V.K."/>
            <person name="Oliveira M.C."/>
            <person name="Oliveira V.R."/>
            <person name="Pereira H.A."/>
            <person name="Rossi A."/>
            <person name="Sena J.A.D."/>
            <person name="Silva C."/>
            <person name="de Souza R.F."/>
            <person name="Spinola L.A.F."/>
            <person name="Takita M.A."/>
            <person name="Tamura R.E."/>
            <person name="Teixeira E.C."/>
            <person name="Tezza R.I.D."/>
            <person name="Trindade dos Santos M."/>
            <person name="Truffi D."/>
            <person name="Tsai S.M."/>
            <person name="White F.F."/>
            <person name="Setubal J.C."/>
            <person name="Kitajima J.P."/>
        </authorList>
    </citation>
    <scope>NUCLEOTIDE SEQUENCE [LARGE SCALE GENOMIC DNA]</scope>
    <source>
        <strain>ATCC 33913 / DSM 3586 / NCPPB 528 / LMG 568 / P 25</strain>
    </source>
</reference>
<gene>
    <name type="ordered locus">XCC3997</name>
</gene>
<accession>Q8P3S2</accession>
<organism>
    <name type="scientific">Xanthomonas campestris pv. campestris (strain ATCC 33913 / DSM 3586 / NCPPB 528 / LMG 568 / P 25)</name>
    <dbReference type="NCBI Taxonomy" id="190485"/>
    <lineage>
        <taxon>Bacteria</taxon>
        <taxon>Pseudomonadati</taxon>
        <taxon>Pseudomonadota</taxon>
        <taxon>Gammaproteobacteria</taxon>
        <taxon>Lysobacterales</taxon>
        <taxon>Lysobacteraceae</taxon>
        <taxon>Xanthomonas</taxon>
    </lineage>
</organism>
<proteinExistence type="inferred from homology"/>
<dbReference type="EMBL" id="AE008922">
    <property type="protein sequence ID" value="AAM43218.1"/>
    <property type="molecule type" value="Genomic_DNA"/>
</dbReference>
<dbReference type="RefSeq" id="NP_639336.1">
    <property type="nucleotide sequence ID" value="NC_003902.1"/>
</dbReference>
<dbReference type="RefSeq" id="WP_011039068.1">
    <property type="nucleotide sequence ID" value="NC_003902.1"/>
</dbReference>
<dbReference type="SMR" id="Q8P3S2"/>
<dbReference type="STRING" id="190485.XCC3997"/>
<dbReference type="EnsemblBacteria" id="AAM43218">
    <property type="protein sequence ID" value="AAM43218"/>
    <property type="gene ID" value="XCC3997"/>
</dbReference>
<dbReference type="KEGG" id="xcc:XCC3997"/>
<dbReference type="PATRIC" id="fig|190485.4.peg.4281"/>
<dbReference type="eggNOG" id="COG3100">
    <property type="taxonomic scope" value="Bacteria"/>
</dbReference>
<dbReference type="HOGENOM" id="CLU_155118_0_0_6"/>
<dbReference type="OrthoDB" id="7062382at2"/>
<dbReference type="Proteomes" id="UP000001010">
    <property type="component" value="Chromosome"/>
</dbReference>
<dbReference type="Gene3D" id="3.10.510.20">
    <property type="entry name" value="YcgL domain"/>
    <property type="match status" value="1"/>
</dbReference>
<dbReference type="HAMAP" id="MF_01866">
    <property type="entry name" value="UPF0745"/>
    <property type="match status" value="1"/>
</dbReference>
<dbReference type="InterPro" id="IPR038068">
    <property type="entry name" value="YcgL-like_sf"/>
</dbReference>
<dbReference type="InterPro" id="IPR027354">
    <property type="entry name" value="YcgL_dom"/>
</dbReference>
<dbReference type="PANTHER" id="PTHR38109">
    <property type="entry name" value="PROTEIN YCGL"/>
    <property type="match status" value="1"/>
</dbReference>
<dbReference type="PANTHER" id="PTHR38109:SF1">
    <property type="entry name" value="PROTEIN YCGL"/>
    <property type="match status" value="1"/>
</dbReference>
<dbReference type="Pfam" id="PF05166">
    <property type="entry name" value="YcgL"/>
    <property type="match status" value="1"/>
</dbReference>
<dbReference type="SUPFAM" id="SSF160191">
    <property type="entry name" value="YcgL-like"/>
    <property type="match status" value="1"/>
</dbReference>
<dbReference type="PROSITE" id="PS51648">
    <property type="entry name" value="YCGL"/>
    <property type="match status" value="1"/>
</dbReference>